<feature type="chain" id="PRO_1000057070" description="Endoribonuclease YbeY">
    <location>
        <begin position="1"/>
        <end position="155"/>
    </location>
</feature>
<feature type="binding site" evidence="1">
    <location>
        <position position="114"/>
    </location>
    <ligand>
        <name>Zn(2+)</name>
        <dbReference type="ChEBI" id="CHEBI:29105"/>
        <note>catalytic</note>
    </ligand>
</feature>
<feature type="binding site" evidence="1">
    <location>
        <position position="118"/>
    </location>
    <ligand>
        <name>Zn(2+)</name>
        <dbReference type="ChEBI" id="CHEBI:29105"/>
        <note>catalytic</note>
    </ligand>
</feature>
<feature type="binding site" evidence="1">
    <location>
        <position position="124"/>
    </location>
    <ligand>
        <name>Zn(2+)</name>
        <dbReference type="ChEBI" id="CHEBI:29105"/>
        <note>catalytic</note>
    </ligand>
</feature>
<comment type="function">
    <text evidence="1">Single strand-specific metallo-endoribonuclease involved in late-stage 70S ribosome quality control and in maturation of the 3' terminus of the 16S rRNA.</text>
</comment>
<comment type="cofactor">
    <cofactor evidence="1">
        <name>Zn(2+)</name>
        <dbReference type="ChEBI" id="CHEBI:29105"/>
    </cofactor>
    <text evidence="1">Binds 1 zinc ion.</text>
</comment>
<comment type="subcellular location">
    <subcellularLocation>
        <location evidence="1">Cytoplasm</location>
    </subcellularLocation>
</comment>
<comment type="similarity">
    <text evidence="1">Belongs to the endoribonuclease YbeY family.</text>
</comment>
<dbReference type="EC" id="3.1.-.-" evidence="1"/>
<dbReference type="EMBL" id="CP000653">
    <property type="protein sequence ID" value="ABP59866.1"/>
    <property type="molecule type" value="Genomic_DNA"/>
</dbReference>
<dbReference type="RefSeq" id="WP_012016585.1">
    <property type="nucleotide sequence ID" value="NC_009436.1"/>
</dbReference>
<dbReference type="SMR" id="A4W836"/>
<dbReference type="STRING" id="399742.Ent638_1185"/>
<dbReference type="GeneID" id="93308267"/>
<dbReference type="KEGG" id="ent:Ent638_1185"/>
<dbReference type="eggNOG" id="COG0319">
    <property type="taxonomic scope" value="Bacteria"/>
</dbReference>
<dbReference type="HOGENOM" id="CLU_106710_0_1_6"/>
<dbReference type="OrthoDB" id="9807740at2"/>
<dbReference type="Proteomes" id="UP000000230">
    <property type="component" value="Chromosome"/>
</dbReference>
<dbReference type="GO" id="GO:0005737">
    <property type="term" value="C:cytoplasm"/>
    <property type="evidence" value="ECO:0007669"/>
    <property type="project" value="UniProtKB-SubCell"/>
</dbReference>
<dbReference type="GO" id="GO:0004222">
    <property type="term" value="F:metalloendopeptidase activity"/>
    <property type="evidence" value="ECO:0007669"/>
    <property type="project" value="InterPro"/>
</dbReference>
<dbReference type="GO" id="GO:0004521">
    <property type="term" value="F:RNA endonuclease activity"/>
    <property type="evidence" value="ECO:0007669"/>
    <property type="project" value="UniProtKB-UniRule"/>
</dbReference>
<dbReference type="GO" id="GO:0008270">
    <property type="term" value="F:zinc ion binding"/>
    <property type="evidence" value="ECO:0007669"/>
    <property type="project" value="UniProtKB-UniRule"/>
</dbReference>
<dbReference type="GO" id="GO:0006364">
    <property type="term" value="P:rRNA processing"/>
    <property type="evidence" value="ECO:0007669"/>
    <property type="project" value="UniProtKB-UniRule"/>
</dbReference>
<dbReference type="FunFam" id="3.40.390.30:FF:000001">
    <property type="entry name" value="Endoribonuclease YbeY"/>
    <property type="match status" value="1"/>
</dbReference>
<dbReference type="Gene3D" id="3.40.390.30">
    <property type="entry name" value="Metalloproteases ('zincins'), catalytic domain"/>
    <property type="match status" value="1"/>
</dbReference>
<dbReference type="HAMAP" id="MF_00009">
    <property type="entry name" value="Endoribonucl_YbeY"/>
    <property type="match status" value="1"/>
</dbReference>
<dbReference type="InterPro" id="IPR023091">
    <property type="entry name" value="MetalPrtase_cat_dom_sf_prd"/>
</dbReference>
<dbReference type="InterPro" id="IPR002036">
    <property type="entry name" value="YbeY"/>
</dbReference>
<dbReference type="InterPro" id="IPR020549">
    <property type="entry name" value="YbeY_CS"/>
</dbReference>
<dbReference type="NCBIfam" id="TIGR00043">
    <property type="entry name" value="rRNA maturation RNase YbeY"/>
    <property type="match status" value="1"/>
</dbReference>
<dbReference type="PANTHER" id="PTHR46986">
    <property type="entry name" value="ENDORIBONUCLEASE YBEY, CHLOROPLASTIC"/>
    <property type="match status" value="1"/>
</dbReference>
<dbReference type="PANTHER" id="PTHR46986:SF1">
    <property type="entry name" value="ENDORIBONUCLEASE YBEY, CHLOROPLASTIC"/>
    <property type="match status" value="1"/>
</dbReference>
<dbReference type="Pfam" id="PF02130">
    <property type="entry name" value="YbeY"/>
    <property type="match status" value="1"/>
</dbReference>
<dbReference type="SUPFAM" id="SSF55486">
    <property type="entry name" value="Metalloproteases ('zincins'), catalytic domain"/>
    <property type="match status" value="1"/>
</dbReference>
<dbReference type="PROSITE" id="PS01306">
    <property type="entry name" value="UPF0054"/>
    <property type="match status" value="1"/>
</dbReference>
<proteinExistence type="inferred from homology"/>
<gene>
    <name evidence="1" type="primary">ybeY</name>
    <name type="ordered locus">Ent638_1185</name>
</gene>
<evidence type="ECO:0000255" key="1">
    <source>
        <dbReference type="HAMAP-Rule" id="MF_00009"/>
    </source>
</evidence>
<protein>
    <recommendedName>
        <fullName evidence="1">Endoribonuclease YbeY</fullName>
        <ecNumber evidence="1">3.1.-.-</ecNumber>
    </recommendedName>
</protein>
<name>YBEY_ENT38</name>
<keyword id="KW-0963">Cytoplasm</keyword>
<keyword id="KW-0255">Endonuclease</keyword>
<keyword id="KW-0378">Hydrolase</keyword>
<keyword id="KW-0479">Metal-binding</keyword>
<keyword id="KW-0540">Nuclease</keyword>
<keyword id="KW-0690">Ribosome biogenesis</keyword>
<keyword id="KW-0698">rRNA processing</keyword>
<keyword id="KW-0862">Zinc</keyword>
<sequence>MSQVILDLQLACEDNSGLPEESQFQKWLDAVIPQFQEESEVTIRVVDEAESHELNLTYRGKDKPTNVLSFPFEAPPGIELPLLGDLIICRQVVEQEAKEQQKPLDAHWAHMVIHGSLHLLGYDHIEDEEAEEMESLETEIMLALGYEDPYIAEKE</sequence>
<organism>
    <name type="scientific">Enterobacter sp. (strain 638)</name>
    <dbReference type="NCBI Taxonomy" id="399742"/>
    <lineage>
        <taxon>Bacteria</taxon>
        <taxon>Pseudomonadati</taxon>
        <taxon>Pseudomonadota</taxon>
        <taxon>Gammaproteobacteria</taxon>
        <taxon>Enterobacterales</taxon>
        <taxon>Enterobacteriaceae</taxon>
        <taxon>Enterobacter</taxon>
    </lineage>
</organism>
<accession>A4W836</accession>
<reference key="1">
    <citation type="journal article" date="2010" name="PLoS Genet.">
        <title>Genome sequence of the plant growth promoting endophytic bacterium Enterobacter sp. 638.</title>
        <authorList>
            <person name="Taghavi S."/>
            <person name="van der Lelie D."/>
            <person name="Hoffman A."/>
            <person name="Zhang Y.B."/>
            <person name="Walla M.D."/>
            <person name="Vangronsveld J."/>
            <person name="Newman L."/>
            <person name="Monchy S."/>
        </authorList>
    </citation>
    <scope>NUCLEOTIDE SEQUENCE [LARGE SCALE GENOMIC DNA]</scope>
    <source>
        <strain>638</strain>
    </source>
</reference>